<proteinExistence type="inferred from homology"/>
<gene>
    <name evidence="1" type="primary">ahcY</name>
    <name type="ordered locus">PD_0319</name>
</gene>
<keyword id="KW-0963">Cytoplasm</keyword>
<keyword id="KW-0378">Hydrolase</keyword>
<keyword id="KW-0520">NAD</keyword>
<keyword id="KW-0554">One-carbon metabolism</keyword>
<keyword id="KW-1185">Reference proteome</keyword>
<reference key="1">
    <citation type="journal article" date="2003" name="J. Bacteriol.">
        <title>Comparative analyses of the complete genome sequences of Pierce's disease and citrus variegated chlorosis strains of Xylella fastidiosa.</title>
        <authorList>
            <person name="Van Sluys M.A."/>
            <person name="de Oliveira M.C."/>
            <person name="Monteiro-Vitorello C.B."/>
            <person name="Miyaki C.Y."/>
            <person name="Furlan L.R."/>
            <person name="Camargo L.E.A."/>
            <person name="da Silva A.C.R."/>
            <person name="Moon D.H."/>
            <person name="Takita M.A."/>
            <person name="Lemos E.G.M."/>
            <person name="Machado M.A."/>
            <person name="Ferro M.I.T."/>
            <person name="da Silva F.R."/>
            <person name="Goldman M.H.S."/>
            <person name="Goldman G.H."/>
            <person name="Lemos M.V.F."/>
            <person name="El-Dorry H."/>
            <person name="Tsai S.M."/>
            <person name="Carrer H."/>
            <person name="Carraro D.M."/>
            <person name="de Oliveira R.C."/>
            <person name="Nunes L.R."/>
            <person name="Siqueira W.J."/>
            <person name="Coutinho L.L."/>
            <person name="Kimura E.T."/>
            <person name="Ferro E.S."/>
            <person name="Harakava R."/>
            <person name="Kuramae E.E."/>
            <person name="Marino C.L."/>
            <person name="Giglioti E."/>
            <person name="Abreu I.L."/>
            <person name="Alves L.M.C."/>
            <person name="do Amaral A.M."/>
            <person name="Baia G.S."/>
            <person name="Blanco S.R."/>
            <person name="Brito M.S."/>
            <person name="Cannavan F.S."/>
            <person name="Celestino A.V."/>
            <person name="da Cunha A.F."/>
            <person name="Fenille R.C."/>
            <person name="Ferro J.A."/>
            <person name="Formighieri E.F."/>
            <person name="Kishi L.T."/>
            <person name="Leoni S.G."/>
            <person name="Oliveira A.R."/>
            <person name="Rosa V.E. Jr."/>
            <person name="Sassaki F.T."/>
            <person name="Sena J.A.D."/>
            <person name="de Souza A.A."/>
            <person name="Truffi D."/>
            <person name="Tsukumo F."/>
            <person name="Yanai G.M."/>
            <person name="Zaros L.G."/>
            <person name="Civerolo E.L."/>
            <person name="Simpson A.J.G."/>
            <person name="Almeida N.F. Jr."/>
            <person name="Setubal J.C."/>
            <person name="Kitajima J.P."/>
        </authorList>
    </citation>
    <scope>NUCLEOTIDE SEQUENCE [LARGE SCALE GENOMIC DNA]</scope>
    <source>
        <strain>Temecula1 / ATCC 700964</strain>
    </source>
</reference>
<evidence type="ECO:0000255" key="1">
    <source>
        <dbReference type="HAMAP-Rule" id="MF_00563"/>
    </source>
</evidence>
<dbReference type="EC" id="3.13.2.1" evidence="1"/>
<dbReference type="EMBL" id="AE009442">
    <property type="protein sequence ID" value="AAO28203.1"/>
    <property type="molecule type" value="Genomic_DNA"/>
</dbReference>
<dbReference type="RefSeq" id="WP_004089347.1">
    <property type="nucleotide sequence ID" value="NC_004556.1"/>
</dbReference>
<dbReference type="SMR" id="Q87EI8"/>
<dbReference type="GeneID" id="93904020"/>
<dbReference type="KEGG" id="xft:PD_0319"/>
<dbReference type="HOGENOM" id="CLU_025194_2_1_6"/>
<dbReference type="UniPathway" id="UPA00314">
    <property type="reaction ID" value="UER00076"/>
</dbReference>
<dbReference type="Proteomes" id="UP000002516">
    <property type="component" value="Chromosome"/>
</dbReference>
<dbReference type="GO" id="GO:0005829">
    <property type="term" value="C:cytosol"/>
    <property type="evidence" value="ECO:0007669"/>
    <property type="project" value="TreeGrafter"/>
</dbReference>
<dbReference type="GO" id="GO:0004013">
    <property type="term" value="F:adenosylhomocysteinase activity"/>
    <property type="evidence" value="ECO:0007669"/>
    <property type="project" value="UniProtKB-UniRule"/>
</dbReference>
<dbReference type="GO" id="GO:0071269">
    <property type="term" value="P:L-homocysteine biosynthetic process"/>
    <property type="evidence" value="ECO:0007669"/>
    <property type="project" value="UniProtKB-UniRule"/>
</dbReference>
<dbReference type="GO" id="GO:0006730">
    <property type="term" value="P:one-carbon metabolic process"/>
    <property type="evidence" value="ECO:0007669"/>
    <property type="project" value="UniProtKB-KW"/>
</dbReference>
<dbReference type="GO" id="GO:0033353">
    <property type="term" value="P:S-adenosylmethionine cycle"/>
    <property type="evidence" value="ECO:0007669"/>
    <property type="project" value="TreeGrafter"/>
</dbReference>
<dbReference type="CDD" id="cd00401">
    <property type="entry name" value="SAHH"/>
    <property type="match status" value="1"/>
</dbReference>
<dbReference type="FunFam" id="3.40.50.720:FF:000004">
    <property type="entry name" value="Adenosylhomocysteinase"/>
    <property type="match status" value="1"/>
</dbReference>
<dbReference type="Gene3D" id="3.40.50.1480">
    <property type="entry name" value="Adenosylhomocysteinase-like"/>
    <property type="match status" value="1"/>
</dbReference>
<dbReference type="Gene3D" id="3.40.50.720">
    <property type="entry name" value="NAD(P)-binding Rossmann-like Domain"/>
    <property type="match status" value="1"/>
</dbReference>
<dbReference type="HAMAP" id="MF_00563">
    <property type="entry name" value="AdoHcyase"/>
    <property type="match status" value="1"/>
</dbReference>
<dbReference type="InterPro" id="IPR042172">
    <property type="entry name" value="Adenosylhomocyst_ase-like_sf"/>
</dbReference>
<dbReference type="InterPro" id="IPR000043">
    <property type="entry name" value="Adenosylhomocysteinase-like"/>
</dbReference>
<dbReference type="InterPro" id="IPR015878">
    <property type="entry name" value="Ado_hCys_hydrolase_NAD-bd"/>
</dbReference>
<dbReference type="InterPro" id="IPR036291">
    <property type="entry name" value="NAD(P)-bd_dom_sf"/>
</dbReference>
<dbReference type="InterPro" id="IPR020082">
    <property type="entry name" value="S-Ado-L-homoCys_hydrolase_CS"/>
</dbReference>
<dbReference type="NCBIfam" id="TIGR00936">
    <property type="entry name" value="ahcY"/>
    <property type="match status" value="1"/>
</dbReference>
<dbReference type="NCBIfam" id="NF004005">
    <property type="entry name" value="PRK05476.2-3"/>
    <property type="match status" value="1"/>
</dbReference>
<dbReference type="PANTHER" id="PTHR23420">
    <property type="entry name" value="ADENOSYLHOMOCYSTEINASE"/>
    <property type="match status" value="1"/>
</dbReference>
<dbReference type="PANTHER" id="PTHR23420:SF0">
    <property type="entry name" value="ADENOSYLHOMOCYSTEINASE"/>
    <property type="match status" value="1"/>
</dbReference>
<dbReference type="Pfam" id="PF05221">
    <property type="entry name" value="AdoHcyase"/>
    <property type="match status" value="1"/>
</dbReference>
<dbReference type="Pfam" id="PF00670">
    <property type="entry name" value="AdoHcyase_NAD"/>
    <property type="match status" value="1"/>
</dbReference>
<dbReference type="PIRSF" id="PIRSF001109">
    <property type="entry name" value="Ad_hcy_hydrolase"/>
    <property type="match status" value="1"/>
</dbReference>
<dbReference type="SMART" id="SM00996">
    <property type="entry name" value="AdoHcyase"/>
    <property type="match status" value="1"/>
</dbReference>
<dbReference type="SMART" id="SM00997">
    <property type="entry name" value="AdoHcyase_NAD"/>
    <property type="match status" value="1"/>
</dbReference>
<dbReference type="SUPFAM" id="SSF52283">
    <property type="entry name" value="Formate/glycerate dehydrogenase catalytic domain-like"/>
    <property type="match status" value="1"/>
</dbReference>
<dbReference type="SUPFAM" id="SSF51735">
    <property type="entry name" value="NAD(P)-binding Rossmann-fold domains"/>
    <property type="match status" value="1"/>
</dbReference>
<dbReference type="PROSITE" id="PS00738">
    <property type="entry name" value="ADOHCYASE_1"/>
    <property type="match status" value="1"/>
</dbReference>
<dbReference type="PROSITE" id="PS00739">
    <property type="entry name" value="ADOHCYASE_2"/>
    <property type="match status" value="1"/>
</dbReference>
<comment type="function">
    <text evidence="1">May play a key role in the regulation of the intracellular concentration of adenosylhomocysteine.</text>
</comment>
<comment type="catalytic activity">
    <reaction evidence="1">
        <text>S-adenosyl-L-homocysteine + H2O = L-homocysteine + adenosine</text>
        <dbReference type="Rhea" id="RHEA:21708"/>
        <dbReference type="ChEBI" id="CHEBI:15377"/>
        <dbReference type="ChEBI" id="CHEBI:16335"/>
        <dbReference type="ChEBI" id="CHEBI:57856"/>
        <dbReference type="ChEBI" id="CHEBI:58199"/>
        <dbReference type="EC" id="3.13.2.1"/>
    </reaction>
</comment>
<comment type="cofactor">
    <cofactor evidence="1">
        <name>NAD(+)</name>
        <dbReference type="ChEBI" id="CHEBI:57540"/>
    </cofactor>
    <text evidence="1">Binds 1 NAD(+) per subunit.</text>
</comment>
<comment type="pathway">
    <text evidence="1">Amino-acid biosynthesis; L-homocysteine biosynthesis; L-homocysteine from S-adenosyl-L-homocysteine: step 1/1.</text>
</comment>
<comment type="subcellular location">
    <subcellularLocation>
        <location evidence="1">Cytoplasm</location>
    </subcellularLocation>
</comment>
<comment type="similarity">
    <text evidence="1">Belongs to the adenosylhomocysteinase family.</text>
</comment>
<protein>
    <recommendedName>
        <fullName evidence="1">Adenosylhomocysteinase</fullName>
        <ecNumber evidence="1">3.13.2.1</ecNumber>
    </recommendedName>
    <alternativeName>
        <fullName evidence="1">S-adenosyl-L-homocysteine hydrolase</fullName>
        <shortName evidence="1">AdoHcyase</shortName>
    </alternativeName>
</protein>
<organism>
    <name type="scientific">Xylella fastidiosa (strain Temecula1 / ATCC 700964)</name>
    <dbReference type="NCBI Taxonomy" id="183190"/>
    <lineage>
        <taxon>Bacteria</taxon>
        <taxon>Pseudomonadati</taxon>
        <taxon>Pseudomonadota</taxon>
        <taxon>Gammaproteobacteria</taxon>
        <taxon>Lysobacterales</taxon>
        <taxon>Lysobacteraceae</taxon>
        <taxon>Xylella</taxon>
    </lineage>
</organism>
<name>SAHH_XYLFT</name>
<sequence>MNTHPQTSPNTHYKIADISLADWGRKEIDIAEHEMPGLMSIRRKYASKQPLKGVRVTGSLHMTIQTAVLIETLKDIGADVRWASCNIFSTQDHAAAAIATSGTPVFAWKGETLEEYWDCTLQALTFTLADGTLTGPELIVDDGGDATLLIHKGYELENGSTWVDEPSDSLEEQVIKRLLKRIAIERPGYWTRVVNDWKGVSEETTTGVHRLYQIAATGRLLVPAINVNDSVTKSKFDNLYGCRESLADGLKRAMDVMLAGKLAVVCGYGDVGKGSAHSLRAYGARVIVTEIDPICALQAAMEGFEVTTVEDTLGQADIYVTTTGNKDVIRIEHMTAMKDQVIVCNIGHFDNEIQVDALNALTGVQKINIKPQVDKFILPNGNTLFLLAEGRLVNLGCATGHPSFVMSNSFANQTLAQIDLWQNKDVYEKNVYRLPKKLDEEVARLHLEKIGVKLTTLTANQAAYLGISVEGPFKPEHYRY</sequence>
<accession>Q87EI8</accession>
<feature type="chain" id="PRO_0000116999" description="Adenosylhomocysteinase">
    <location>
        <begin position="1"/>
        <end position="480"/>
    </location>
</feature>
<feature type="binding site" evidence="1">
    <location>
        <position position="63"/>
    </location>
    <ligand>
        <name>substrate</name>
    </ligand>
</feature>
<feature type="binding site" evidence="1">
    <location>
        <position position="142"/>
    </location>
    <ligand>
        <name>substrate</name>
    </ligand>
</feature>
<feature type="binding site" evidence="1">
    <location>
        <position position="203"/>
    </location>
    <ligand>
        <name>substrate</name>
    </ligand>
</feature>
<feature type="binding site" evidence="1">
    <location>
        <begin position="204"/>
        <end position="206"/>
    </location>
    <ligand>
        <name>NAD(+)</name>
        <dbReference type="ChEBI" id="CHEBI:57540"/>
    </ligand>
</feature>
<feature type="binding site" evidence="1">
    <location>
        <position position="233"/>
    </location>
    <ligand>
        <name>substrate</name>
    </ligand>
</feature>
<feature type="binding site" evidence="1">
    <location>
        <position position="237"/>
    </location>
    <ligand>
        <name>substrate</name>
    </ligand>
</feature>
<feature type="binding site" evidence="1">
    <location>
        <position position="238"/>
    </location>
    <ligand>
        <name>NAD(+)</name>
        <dbReference type="ChEBI" id="CHEBI:57540"/>
    </ligand>
</feature>
<feature type="binding site" evidence="1">
    <location>
        <begin position="267"/>
        <end position="272"/>
    </location>
    <ligand>
        <name>NAD(+)</name>
        <dbReference type="ChEBI" id="CHEBI:57540"/>
    </ligand>
</feature>
<feature type="binding site" evidence="1">
    <location>
        <position position="290"/>
    </location>
    <ligand>
        <name>NAD(+)</name>
        <dbReference type="ChEBI" id="CHEBI:57540"/>
    </ligand>
</feature>
<feature type="binding site" evidence="1">
    <location>
        <position position="325"/>
    </location>
    <ligand>
        <name>NAD(+)</name>
        <dbReference type="ChEBI" id="CHEBI:57540"/>
    </ligand>
</feature>
<feature type="binding site" evidence="1">
    <location>
        <begin position="346"/>
        <end position="348"/>
    </location>
    <ligand>
        <name>NAD(+)</name>
        <dbReference type="ChEBI" id="CHEBI:57540"/>
    </ligand>
</feature>
<feature type="binding site" evidence="1">
    <location>
        <position position="394"/>
    </location>
    <ligand>
        <name>NAD(+)</name>
        <dbReference type="ChEBI" id="CHEBI:57540"/>
    </ligand>
</feature>